<keyword id="KW-0002">3D-structure</keyword>
<keyword id="KW-0067">ATP-binding</keyword>
<keyword id="KW-0418">Kinase</keyword>
<keyword id="KW-0545">Nucleotide biosynthesis</keyword>
<keyword id="KW-0547">Nucleotide-binding</keyword>
<keyword id="KW-0808">Transferase</keyword>
<reference key="1">
    <citation type="journal article" date="2008" name="Antimicrob. Agents Chemother.">
        <title>Mutated response regulator graR is responsible for phenotypic conversion of Staphylococcus aureus from heterogeneous vancomycin-intermediate resistance to vancomycin-intermediate resistance.</title>
        <authorList>
            <person name="Neoh H.-M."/>
            <person name="Cui L."/>
            <person name="Yuzawa H."/>
            <person name="Takeuchi F."/>
            <person name="Matsuo M."/>
            <person name="Hiramatsu K."/>
        </authorList>
    </citation>
    <scope>NUCLEOTIDE SEQUENCE [LARGE SCALE GENOMIC DNA]</scope>
    <source>
        <strain>Mu3 / ATCC 700698</strain>
    </source>
</reference>
<accession>A7WYM2</accession>
<feature type="chain" id="PRO_1000023286" description="Thymidylate kinase">
    <location>
        <begin position="1"/>
        <end position="205"/>
    </location>
</feature>
<feature type="binding site" evidence="1">
    <location>
        <begin position="9"/>
        <end position="16"/>
    </location>
    <ligand>
        <name>ATP</name>
        <dbReference type="ChEBI" id="CHEBI:30616"/>
    </ligand>
</feature>
<feature type="strand" evidence="2">
    <location>
        <begin position="3"/>
        <end position="8"/>
    </location>
</feature>
<feature type="helix" evidence="2">
    <location>
        <begin position="15"/>
        <end position="26"/>
    </location>
</feature>
<feature type="turn" evidence="2">
    <location>
        <begin position="27"/>
        <end position="29"/>
    </location>
</feature>
<feature type="strand" evidence="2">
    <location>
        <begin position="32"/>
        <end position="38"/>
    </location>
</feature>
<feature type="helix" evidence="2">
    <location>
        <begin position="42"/>
        <end position="52"/>
    </location>
</feature>
<feature type="helix" evidence="2">
    <location>
        <begin position="59"/>
        <end position="76"/>
    </location>
</feature>
<feature type="helix" evidence="2">
    <location>
        <begin position="78"/>
        <end position="83"/>
    </location>
</feature>
<feature type="strand" evidence="2">
    <location>
        <begin position="87"/>
        <end position="92"/>
    </location>
</feature>
<feature type="helix" evidence="2">
    <location>
        <begin position="94"/>
        <end position="100"/>
    </location>
</feature>
<feature type="turn" evidence="2">
    <location>
        <begin position="101"/>
        <end position="105"/>
    </location>
</feature>
<feature type="helix" evidence="2">
    <location>
        <begin position="109"/>
        <end position="120"/>
    </location>
</feature>
<feature type="strand" evidence="2">
    <location>
        <begin position="126"/>
        <end position="132"/>
    </location>
</feature>
<feature type="helix" evidence="2">
    <location>
        <begin position="135"/>
        <end position="144"/>
    </location>
</feature>
<feature type="helix" evidence="2">
    <location>
        <begin position="154"/>
        <end position="173"/>
    </location>
</feature>
<feature type="strand" evidence="2">
    <location>
        <begin position="176"/>
        <end position="182"/>
    </location>
</feature>
<feature type="helix" evidence="2">
    <location>
        <begin position="187"/>
        <end position="202"/>
    </location>
</feature>
<comment type="function">
    <text evidence="1">Phosphorylation of dTMP to form dTDP in both de novo and salvage pathways of dTTP synthesis.</text>
</comment>
<comment type="catalytic activity">
    <reaction evidence="1">
        <text>dTMP + ATP = dTDP + ADP</text>
        <dbReference type="Rhea" id="RHEA:13517"/>
        <dbReference type="ChEBI" id="CHEBI:30616"/>
        <dbReference type="ChEBI" id="CHEBI:58369"/>
        <dbReference type="ChEBI" id="CHEBI:63528"/>
        <dbReference type="ChEBI" id="CHEBI:456216"/>
        <dbReference type="EC" id="2.7.4.9"/>
    </reaction>
</comment>
<comment type="similarity">
    <text evidence="1">Belongs to the thymidylate kinase family.</text>
</comment>
<evidence type="ECO:0000255" key="1">
    <source>
        <dbReference type="HAMAP-Rule" id="MF_00165"/>
    </source>
</evidence>
<evidence type="ECO:0007829" key="2">
    <source>
        <dbReference type="PDB" id="4XWA"/>
    </source>
</evidence>
<sequence>MSAFITFEGPEGSGKTTVINEVYHRLVKDYDVIMTREPGGVPTGEEIRKIVLEGNDMDIRTEAMLFAASRREHLVLKVIPALKEGKVVLCDRYIDSSLAYQGYARGIGVEEVRALNEFAINGLYPDLTIYLNVSAEVGRERIIKNSRDQNRLDQEDLKFHEKVIEGYQEIIHNESQRFKSVNADQPLENVVEDTYQTIIKYLEKI</sequence>
<name>KTHY_STAA1</name>
<dbReference type="EC" id="2.7.4.9" evidence="1"/>
<dbReference type="EMBL" id="AP009324">
    <property type="protein sequence ID" value="BAF77362.1"/>
    <property type="molecule type" value="Genomic_DNA"/>
</dbReference>
<dbReference type="RefSeq" id="WP_001272126.1">
    <property type="nucleotide sequence ID" value="NZ_CTYB01000022.1"/>
</dbReference>
<dbReference type="PDB" id="4XWA">
    <property type="method" value="X-ray"/>
    <property type="resolution" value="1.89 A"/>
    <property type="chains" value="A/B=1-205"/>
</dbReference>
<dbReference type="PDBsum" id="4XWA"/>
<dbReference type="SMR" id="A7WYM2"/>
<dbReference type="GeneID" id="98344796"/>
<dbReference type="KEGG" id="saw:SAHV_0479"/>
<dbReference type="HOGENOM" id="CLU_049131_0_2_9"/>
<dbReference type="EvolutionaryTrace" id="A7WYM2"/>
<dbReference type="GO" id="GO:0005829">
    <property type="term" value="C:cytosol"/>
    <property type="evidence" value="ECO:0007669"/>
    <property type="project" value="TreeGrafter"/>
</dbReference>
<dbReference type="GO" id="GO:0005524">
    <property type="term" value="F:ATP binding"/>
    <property type="evidence" value="ECO:0007669"/>
    <property type="project" value="UniProtKB-UniRule"/>
</dbReference>
<dbReference type="GO" id="GO:0004798">
    <property type="term" value="F:dTMP kinase activity"/>
    <property type="evidence" value="ECO:0007669"/>
    <property type="project" value="UniProtKB-UniRule"/>
</dbReference>
<dbReference type="GO" id="GO:0006233">
    <property type="term" value="P:dTDP biosynthetic process"/>
    <property type="evidence" value="ECO:0007669"/>
    <property type="project" value="InterPro"/>
</dbReference>
<dbReference type="GO" id="GO:0006235">
    <property type="term" value="P:dTTP biosynthetic process"/>
    <property type="evidence" value="ECO:0007669"/>
    <property type="project" value="UniProtKB-UniRule"/>
</dbReference>
<dbReference type="GO" id="GO:0006227">
    <property type="term" value="P:dUDP biosynthetic process"/>
    <property type="evidence" value="ECO:0007669"/>
    <property type="project" value="TreeGrafter"/>
</dbReference>
<dbReference type="CDD" id="cd01672">
    <property type="entry name" value="TMPK"/>
    <property type="match status" value="1"/>
</dbReference>
<dbReference type="FunFam" id="3.40.50.300:FF:000225">
    <property type="entry name" value="Thymidylate kinase"/>
    <property type="match status" value="1"/>
</dbReference>
<dbReference type="Gene3D" id="3.40.50.300">
    <property type="entry name" value="P-loop containing nucleotide triphosphate hydrolases"/>
    <property type="match status" value="1"/>
</dbReference>
<dbReference type="HAMAP" id="MF_00165">
    <property type="entry name" value="Thymidylate_kinase"/>
    <property type="match status" value="1"/>
</dbReference>
<dbReference type="InterPro" id="IPR027417">
    <property type="entry name" value="P-loop_NTPase"/>
</dbReference>
<dbReference type="InterPro" id="IPR039430">
    <property type="entry name" value="Thymidylate_kin-like_dom"/>
</dbReference>
<dbReference type="InterPro" id="IPR018095">
    <property type="entry name" value="Thymidylate_kin_CS"/>
</dbReference>
<dbReference type="InterPro" id="IPR018094">
    <property type="entry name" value="Thymidylate_kinase"/>
</dbReference>
<dbReference type="NCBIfam" id="TIGR00041">
    <property type="entry name" value="DTMP_kinase"/>
    <property type="match status" value="1"/>
</dbReference>
<dbReference type="PANTHER" id="PTHR10344">
    <property type="entry name" value="THYMIDYLATE KINASE"/>
    <property type="match status" value="1"/>
</dbReference>
<dbReference type="PANTHER" id="PTHR10344:SF4">
    <property type="entry name" value="UMP-CMP KINASE 2, MITOCHONDRIAL"/>
    <property type="match status" value="1"/>
</dbReference>
<dbReference type="Pfam" id="PF02223">
    <property type="entry name" value="Thymidylate_kin"/>
    <property type="match status" value="1"/>
</dbReference>
<dbReference type="SUPFAM" id="SSF52540">
    <property type="entry name" value="P-loop containing nucleoside triphosphate hydrolases"/>
    <property type="match status" value="1"/>
</dbReference>
<dbReference type="PROSITE" id="PS01331">
    <property type="entry name" value="THYMIDYLATE_KINASE"/>
    <property type="match status" value="1"/>
</dbReference>
<proteinExistence type="evidence at protein level"/>
<organism>
    <name type="scientific">Staphylococcus aureus (strain Mu3 / ATCC 700698)</name>
    <dbReference type="NCBI Taxonomy" id="418127"/>
    <lineage>
        <taxon>Bacteria</taxon>
        <taxon>Bacillati</taxon>
        <taxon>Bacillota</taxon>
        <taxon>Bacilli</taxon>
        <taxon>Bacillales</taxon>
        <taxon>Staphylococcaceae</taxon>
        <taxon>Staphylococcus</taxon>
    </lineage>
</organism>
<protein>
    <recommendedName>
        <fullName evidence="1">Thymidylate kinase</fullName>
        <ecNumber evidence="1">2.7.4.9</ecNumber>
    </recommendedName>
    <alternativeName>
        <fullName evidence="1">dTMP kinase</fullName>
    </alternativeName>
</protein>
<gene>
    <name evidence="1" type="primary">tmk</name>
    <name type="ordered locus">SAHV_0479</name>
</gene>